<proteinExistence type="inferred from homology"/>
<keyword id="KW-0004">4Fe-4S</keyword>
<keyword id="KW-0408">Iron</keyword>
<keyword id="KW-0411">Iron-sulfur</keyword>
<keyword id="KW-0479">Metal-binding</keyword>
<keyword id="KW-0489">Methyltransferase</keyword>
<keyword id="KW-1185">Reference proteome</keyword>
<keyword id="KW-0949">S-adenosyl-L-methionine</keyword>
<keyword id="KW-0808">Transferase</keyword>
<feature type="chain" id="PRO_0000162001" description="Uncharacterized RNA methyltransferase lmo1703">
    <location>
        <begin position="1"/>
        <end position="459"/>
    </location>
</feature>
<feature type="domain" description="TRAM" evidence="2">
    <location>
        <begin position="5"/>
        <end position="63"/>
    </location>
</feature>
<feature type="active site" description="Nucleophile" evidence="3">
    <location>
        <position position="415"/>
    </location>
</feature>
<feature type="binding site" evidence="1">
    <location>
        <position position="76"/>
    </location>
    <ligand>
        <name>[4Fe-4S] cluster</name>
        <dbReference type="ChEBI" id="CHEBI:49883"/>
    </ligand>
</feature>
<feature type="binding site" evidence="1">
    <location>
        <position position="82"/>
    </location>
    <ligand>
        <name>[4Fe-4S] cluster</name>
        <dbReference type="ChEBI" id="CHEBI:49883"/>
    </ligand>
</feature>
<feature type="binding site" evidence="1">
    <location>
        <position position="85"/>
    </location>
    <ligand>
        <name>[4Fe-4S] cluster</name>
        <dbReference type="ChEBI" id="CHEBI:49883"/>
    </ligand>
</feature>
<feature type="binding site" evidence="1">
    <location>
        <position position="166"/>
    </location>
    <ligand>
        <name>[4Fe-4S] cluster</name>
        <dbReference type="ChEBI" id="CHEBI:49883"/>
    </ligand>
</feature>
<feature type="binding site" evidence="3">
    <location>
        <position position="290"/>
    </location>
    <ligand>
        <name>S-adenosyl-L-methionine</name>
        <dbReference type="ChEBI" id="CHEBI:59789"/>
    </ligand>
</feature>
<feature type="binding site" evidence="3">
    <location>
        <position position="319"/>
    </location>
    <ligand>
        <name>S-adenosyl-L-methionine</name>
        <dbReference type="ChEBI" id="CHEBI:59789"/>
    </ligand>
</feature>
<feature type="binding site" evidence="3">
    <location>
        <position position="340"/>
    </location>
    <ligand>
        <name>S-adenosyl-L-methionine</name>
        <dbReference type="ChEBI" id="CHEBI:59789"/>
    </ligand>
</feature>
<feature type="binding site" evidence="3">
    <location>
        <position position="388"/>
    </location>
    <ligand>
        <name>S-adenosyl-L-methionine</name>
        <dbReference type="ChEBI" id="CHEBI:59789"/>
    </ligand>
</feature>
<name>Y1703_LISMO</name>
<accession>Q8Y6I1</accession>
<reference key="1">
    <citation type="journal article" date="2001" name="Science">
        <title>Comparative genomics of Listeria species.</title>
        <authorList>
            <person name="Glaser P."/>
            <person name="Frangeul L."/>
            <person name="Buchrieser C."/>
            <person name="Rusniok C."/>
            <person name="Amend A."/>
            <person name="Baquero F."/>
            <person name="Berche P."/>
            <person name="Bloecker H."/>
            <person name="Brandt P."/>
            <person name="Chakraborty T."/>
            <person name="Charbit A."/>
            <person name="Chetouani F."/>
            <person name="Couve E."/>
            <person name="de Daruvar A."/>
            <person name="Dehoux P."/>
            <person name="Domann E."/>
            <person name="Dominguez-Bernal G."/>
            <person name="Duchaud E."/>
            <person name="Durant L."/>
            <person name="Dussurget O."/>
            <person name="Entian K.-D."/>
            <person name="Fsihi H."/>
            <person name="Garcia-del Portillo F."/>
            <person name="Garrido P."/>
            <person name="Gautier L."/>
            <person name="Goebel W."/>
            <person name="Gomez-Lopez N."/>
            <person name="Hain T."/>
            <person name="Hauf J."/>
            <person name="Jackson D."/>
            <person name="Jones L.-M."/>
            <person name="Kaerst U."/>
            <person name="Kreft J."/>
            <person name="Kuhn M."/>
            <person name="Kunst F."/>
            <person name="Kurapkat G."/>
            <person name="Madueno E."/>
            <person name="Maitournam A."/>
            <person name="Mata Vicente J."/>
            <person name="Ng E."/>
            <person name="Nedjari H."/>
            <person name="Nordsiek G."/>
            <person name="Novella S."/>
            <person name="de Pablos B."/>
            <person name="Perez-Diaz J.-C."/>
            <person name="Purcell R."/>
            <person name="Remmel B."/>
            <person name="Rose M."/>
            <person name="Schlueter T."/>
            <person name="Simoes N."/>
            <person name="Tierrez A."/>
            <person name="Vazquez-Boland J.-A."/>
            <person name="Voss H."/>
            <person name="Wehland J."/>
            <person name="Cossart P."/>
        </authorList>
    </citation>
    <scope>NUCLEOTIDE SEQUENCE [LARGE SCALE GENOMIC DNA]</scope>
    <source>
        <strain>ATCC BAA-679 / EGD-e</strain>
    </source>
</reference>
<gene>
    <name type="ordered locus">lmo1703</name>
</gene>
<dbReference type="EC" id="2.1.1.-"/>
<dbReference type="EMBL" id="AL591981">
    <property type="protein sequence ID" value="CAC99781.1"/>
    <property type="molecule type" value="Genomic_DNA"/>
</dbReference>
<dbReference type="PIR" id="AG1287">
    <property type="entry name" value="AG1287"/>
</dbReference>
<dbReference type="RefSeq" id="NP_465228.1">
    <property type="nucleotide sequence ID" value="NC_003210.1"/>
</dbReference>
<dbReference type="SMR" id="Q8Y6I1"/>
<dbReference type="STRING" id="169963.gene:17594384"/>
<dbReference type="PaxDb" id="169963-lmo1703"/>
<dbReference type="DNASU" id="985603"/>
<dbReference type="EnsemblBacteria" id="CAC99781">
    <property type="protein sequence ID" value="CAC99781"/>
    <property type="gene ID" value="CAC99781"/>
</dbReference>
<dbReference type="GeneID" id="985603"/>
<dbReference type="KEGG" id="lmo:lmo1703"/>
<dbReference type="PATRIC" id="fig|169963.11.peg.1746"/>
<dbReference type="eggNOG" id="COG2265">
    <property type="taxonomic scope" value="Bacteria"/>
</dbReference>
<dbReference type="HOGENOM" id="CLU_014689_7_1_9"/>
<dbReference type="OrthoDB" id="9804590at2"/>
<dbReference type="PhylomeDB" id="Q8Y6I1"/>
<dbReference type="BioCyc" id="LMON169963:LMO1703-MONOMER"/>
<dbReference type="Proteomes" id="UP000000817">
    <property type="component" value="Chromosome"/>
</dbReference>
<dbReference type="GO" id="GO:0051539">
    <property type="term" value="F:4 iron, 4 sulfur cluster binding"/>
    <property type="evidence" value="ECO:0007669"/>
    <property type="project" value="UniProtKB-KW"/>
</dbReference>
<dbReference type="GO" id="GO:0046872">
    <property type="term" value="F:metal ion binding"/>
    <property type="evidence" value="ECO:0007669"/>
    <property type="project" value="UniProtKB-KW"/>
</dbReference>
<dbReference type="GO" id="GO:0070041">
    <property type="term" value="F:rRNA (uridine-C5-)-methyltransferase activity"/>
    <property type="evidence" value="ECO:0000318"/>
    <property type="project" value="GO_Central"/>
</dbReference>
<dbReference type="GO" id="GO:0070475">
    <property type="term" value="P:rRNA base methylation"/>
    <property type="evidence" value="ECO:0000318"/>
    <property type="project" value="GO_Central"/>
</dbReference>
<dbReference type="CDD" id="cd02440">
    <property type="entry name" value="AdoMet_MTases"/>
    <property type="match status" value="1"/>
</dbReference>
<dbReference type="FunFam" id="3.40.50.150:FF:000009">
    <property type="entry name" value="23S rRNA (Uracil(1939)-C(5))-methyltransferase RlmD"/>
    <property type="match status" value="1"/>
</dbReference>
<dbReference type="FunFam" id="2.40.50.140:FF:000097">
    <property type="entry name" value="23S rRNA (uracil(1939)-C(5))-methyltransferase RlmD"/>
    <property type="match status" value="1"/>
</dbReference>
<dbReference type="FunFam" id="2.40.50.1070:FF:000003">
    <property type="entry name" value="23S rRNA (Uracil-5-)-methyltransferase RumA"/>
    <property type="match status" value="1"/>
</dbReference>
<dbReference type="Gene3D" id="2.40.50.1070">
    <property type="match status" value="1"/>
</dbReference>
<dbReference type="Gene3D" id="2.40.50.140">
    <property type="entry name" value="Nucleic acid-binding proteins"/>
    <property type="match status" value="1"/>
</dbReference>
<dbReference type="Gene3D" id="3.40.50.150">
    <property type="entry name" value="Vaccinia Virus protein VP39"/>
    <property type="match status" value="1"/>
</dbReference>
<dbReference type="InterPro" id="IPR030390">
    <property type="entry name" value="MeTrfase_TrmA_AS"/>
</dbReference>
<dbReference type="InterPro" id="IPR030391">
    <property type="entry name" value="MeTrfase_TrmA_CS"/>
</dbReference>
<dbReference type="InterPro" id="IPR012340">
    <property type="entry name" value="NA-bd_OB-fold"/>
</dbReference>
<dbReference type="InterPro" id="IPR029063">
    <property type="entry name" value="SAM-dependent_MTases_sf"/>
</dbReference>
<dbReference type="InterPro" id="IPR002792">
    <property type="entry name" value="TRAM_dom"/>
</dbReference>
<dbReference type="InterPro" id="IPR010280">
    <property type="entry name" value="U5_MeTrfase_fam"/>
</dbReference>
<dbReference type="NCBIfam" id="TIGR00479">
    <property type="entry name" value="rumA"/>
    <property type="match status" value="1"/>
</dbReference>
<dbReference type="PANTHER" id="PTHR11061:SF45">
    <property type="match status" value="1"/>
</dbReference>
<dbReference type="PANTHER" id="PTHR11061">
    <property type="entry name" value="RNA M5U METHYLTRANSFERASE"/>
    <property type="match status" value="1"/>
</dbReference>
<dbReference type="Pfam" id="PF01938">
    <property type="entry name" value="TRAM"/>
    <property type="match status" value="1"/>
</dbReference>
<dbReference type="Pfam" id="PF05958">
    <property type="entry name" value="tRNA_U5-meth_tr"/>
    <property type="match status" value="1"/>
</dbReference>
<dbReference type="SUPFAM" id="SSF50249">
    <property type="entry name" value="Nucleic acid-binding proteins"/>
    <property type="match status" value="1"/>
</dbReference>
<dbReference type="SUPFAM" id="SSF53335">
    <property type="entry name" value="S-adenosyl-L-methionine-dependent methyltransferases"/>
    <property type="match status" value="1"/>
</dbReference>
<dbReference type="PROSITE" id="PS51687">
    <property type="entry name" value="SAM_MT_RNA_M5U"/>
    <property type="match status" value="1"/>
</dbReference>
<dbReference type="PROSITE" id="PS50926">
    <property type="entry name" value="TRAM"/>
    <property type="match status" value="1"/>
</dbReference>
<dbReference type="PROSITE" id="PS01230">
    <property type="entry name" value="TRMA_1"/>
    <property type="match status" value="1"/>
</dbReference>
<dbReference type="PROSITE" id="PS01231">
    <property type="entry name" value="TRMA_2"/>
    <property type="match status" value="1"/>
</dbReference>
<protein>
    <recommendedName>
        <fullName>Uncharacterized RNA methyltransferase lmo1703</fullName>
        <ecNumber>2.1.1.-</ecNumber>
    </recommendedName>
</protein>
<organism>
    <name type="scientific">Listeria monocytogenes serovar 1/2a (strain ATCC BAA-679 / EGD-e)</name>
    <dbReference type="NCBI Taxonomy" id="169963"/>
    <lineage>
        <taxon>Bacteria</taxon>
        <taxon>Bacillati</taxon>
        <taxon>Bacillota</taxon>
        <taxon>Bacilli</taxon>
        <taxon>Bacillales</taxon>
        <taxon>Listeriaceae</taxon>
        <taxon>Listeria</taxon>
    </lineage>
</organism>
<comment type="similarity">
    <text evidence="3">Belongs to the class I-like SAM-binding methyltransferase superfamily. RNA M5U methyltransferase family.</text>
</comment>
<sequence length="459" mass="51325">MNQNPVEEGQKFPLTIRRMGINGEGIGYFKKAVVFVPGAITGEEVVVEAVKVRDRFTEAKLNKIRKKSPNRVTAPCPVYEACGGCQLQHVAYSAQLELKRDIVIQSIEKHTKIDPTKLKIRPTIGMEDPWRYRNKSQFQTRMVGSGQVETGLFGANSHQLVPIEDCIVQQPVTIKVTNFVRDLLEKYGVPIYDEKAGSGIVRTIVVRTGVKTGETQLVFITNSKKLPKKREMLAEIEAALPEVTSIMQNVNQAKSSLIFGDETFLLAGKESIEEKLMELEFDLSARAFFQLNPFQTERLYQEVEKALVLTGSETLVDAYCGVGTIGQAFAGKVKEVRGMDIIPESIEDAKRNAEKNGIENVYYEVGKAEDVLPKWVKEGFRPDAVIVDPPRSGCDQGLIKSLLDVEAKQLVYVSCNPSTLARDLALLAKKYRIRYMQPVDMFPQTAHVETVVLLQLKDK</sequence>
<evidence type="ECO:0000250" key="1"/>
<evidence type="ECO:0000255" key="2">
    <source>
        <dbReference type="PROSITE-ProRule" id="PRU00208"/>
    </source>
</evidence>
<evidence type="ECO:0000255" key="3">
    <source>
        <dbReference type="PROSITE-ProRule" id="PRU01024"/>
    </source>
</evidence>